<name>DNLJ_RHOPA</name>
<dbReference type="EC" id="6.5.1.2" evidence="1"/>
<dbReference type="EMBL" id="BX572604">
    <property type="protein sequence ID" value="CAE28958.1"/>
    <property type="status" value="ALT_INIT"/>
    <property type="molecule type" value="Genomic_DNA"/>
</dbReference>
<dbReference type="RefSeq" id="WP_042441204.1">
    <property type="nucleotide sequence ID" value="NZ_CP116810.1"/>
</dbReference>
<dbReference type="SMR" id="Q6N423"/>
<dbReference type="STRING" id="258594.RPA3517"/>
<dbReference type="GeneID" id="66894619"/>
<dbReference type="eggNOG" id="COG0272">
    <property type="taxonomic scope" value="Bacteria"/>
</dbReference>
<dbReference type="HOGENOM" id="CLU_007764_2_1_5"/>
<dbReference type="GO" id="GO:0005829">
    <property type="term" value="C:cytosol"/>
    <property type="evidence" value="ECO:0007669"/>
    <property type="project" value="TreeGrafter"/>
</dbReference>
<dbReference type="GO" id="GO:0003911">
    <property type="term" value="F:DNA ligase (NAD+) activity"/>
    <property type="evidence" value="ECO:0007669"/>
    <property type="project" value="UniProtKB-UniRule"/>
</dbReference>
<dbReference type="GO" id="GO:0046872">
    <property type="term" value="F:metal ion binding"/>
    <property type="evidence" value="ECO:0007669"/>
    <property type="project" value="UniProtKB-KW"/>
</dbReference>
<dbReference type="GO" id="GO:0006281">
    <property type="term" value="P:DNA repair"/>
    <property type="evidence" value="ECO:0007669"/>
    <property type="project" value="UniProtKB-KW"/>
</dbReference>
<dbReference type="GO" id="GO:0006260">
    <property type="term" value="P:DNA replication"/>
    <property type="evidence" value="ECO:0007669"/>
    <property type="project" value="UniProtKB-KW"/>
</dbReference>
<dbReference type="CDD" id="cd17748">
    <property type="entry name" value="BRCT_DNA_ligase_like"/>
    <property type="match status" value="1"/>
</dbReference>
<dbReference type="CDD" id="cd00114">
    <property type="entry name" value="LIGANc"/>
    <property type="match status" value="1"/>
</dbReference>
<dbReference type="FunFam" id="1.10.150.20:FF:000007">
    <property type="entry name" value="DNA ligase"/>
    <property type="match status" value="1"/>
</dbReference>
<dbReference type="FunFam" id="3.30.470.30:FF:000001">
    <property type="entry name" value="DNA ligase"/>
    <property type="match status" value="1"/>
</dbReference>
<dbReference type="FunFam" id="3.40.50.10190:FF:000054">
    <property type="entry name" value="DNA ligase"/>
    <property type="match status" value="1"/>
</dbReference>
<dbReference type="Gene3D" id="6.20.10.30">
    <property type="match status" value="1"/>
</dbReference>
<dbReference type="Gene3D" id="1.10.150.20">
    <property type="entry name" value="5' to 3' exonuclease, C-terminal subdomain"/>
    <property type="match status" value="2"/>
</dbReference>
<dbReference type="Gene3D" id="3.40.50.10190">
    <property type="entry name" value="BRCT domain"/>
    <property type="match status" value="1"/>
</dbReference>
<dbReference type="Gene3D" id="3.30.470.30">
    <property type="entry name" value="DNA ligase/mRNA capping enzyme"/>
    <property type="match status" value="1"/>
</dbReference>
<dbReference type="Gene3D" id="1.10.287.610">
    <property type="entry name" value="Helix hairpin bin"/>
    <property type="match status" value="1"/>
</dbReference>
<dbReference type="Gene3D" id="2.40.50.140">
    <property type="entry name" value="Nucleic acid-binding proteins"/>
    <property type="match status" value="1"/>
</dbReference>
<dbReference type="HAMAP" id="MF_01588">
    <property type="entry name" value="DNA_ligase_A"/>
    <property type="match status" value="1"/>
</dbReference>
<dbReference type="InterPro" id="IPR001357">
    <property type="entry name" value="BRCT_dom"/>
</dbReference>
<dbReference type="InterPro" id="IPR036420">
    <property type="entry name" value="BRCT_dom_sf"/>
</dbReference>
<dbReference type="InterPro" id="IPR041663">
    <property type="entry name" value="DisA/LigA_HHH"/>
</dbReference>
<dbReference type="InterPro" id="IPR001679">
    <property type="entry name" value="DNA_ligase"/>
</dbReference>
<dbReference type="InterPro" id="IPR018239">
    <property type="entry name" value="DNA_ligase_AS"/>
</dbReference>
<dbReference type="InterPro" id="IPR033136">
    <property type="entry name" value="DNA_ligase_CS"/>
</dbReference>
<dbReference type="InterPro" id="IPR013839">
    <property type="entry name" value="DNAligase_adenylation"/>
</dbReference>
<dbReference type="InterPro" id="IPR013840">
    <property type="entry name" value="DNAligase_N"/>
</dbReference>
<dbReference type="InterPro" id="IPR012340">
    <property type="entry name" value="NA-bd_OB-fold"/>
</dbReference>
<dbReference type="InterPro" id="IPR004150">
    <property type="entry name" value="NAD_DNA_ligase_OB"/>
</dbReference>
<dbReference type="InterPro" id="IPR010994">
    <property type="entry name" value="RuvA_2-like"/>
</dbReference>
<dbReference type="InterPro" id="IPR004149">
    <property type="entry name" value="Znf_DNAligase_C4"/>
</dbReference>
<dbReference type="NCBIfam" id="TIGR00575">
    <property type="entry name" value="dnlj"/>
    <property type="match status" value="1"/>
</dbReference>
<dbReference type="NCBIfam" id="NF005932">
    <property type="entry name" value="PRK07956.1"/>
    <property type="match status" value="1"/>
</dbReference>
<dbReference type="PANTHER" id="PTHR23389">
    <property type="entry name" value="CHROMOSOME TRANSMISSION FIDELITY FACTOR 18"/>
    <property type="match status" value="1"/>
</dbReference>
<dbReference type="PANTHER" id="PTHR23389:SF9">
    <property type="entry name" value="DNA LIGASE"/>
    <property type="match status" value="1"/>
</dbReference>
<dbReference type="Pfam" id="PF00533">
    <property type="entry name" value="BRCT"/>
    <property type="match status" value="1"/>
</dbReference>
<dbReference type="Pfam" id="PF01653">
    <property type="entry name" value="DNA_ligase_aden"/>
    <property type="match status" value="1"/>
</dbReference>
<dbReference type="Pfam" id="PF03120">
    <property type="entry name" value="DNA_ligase_OB"/>
    <property type="match status" value="1"/>
</dbReference>
<dbReference type="Pfam" id="PF03119">
    <property type="entry name" value="DNA_ligase_ZBD"/>
    <property type="match status" value="1"/>
</dbReference>
<dbReference type="Pfam" id="PF12826">
    <property type="entry name" value="HHH_2"/>
    <property type="match status" value="1"/>
</dbReference>
<dbReference type="PIRSF" id="PIRSF001604">
    <property type="entry name" value="LigA"/>
    <property type="match status" value="1"/>
</dbReference>
<dbReference type="SMART" id="SM00292">
    <property type="entry name" value="BRCT"/>
    <property type="match status" value="1"/>
</dbReference>
<dbReference type="SMART" id="SM00532">
    <property type="entry name" value="LIGANc"/>
    <property type="match status" value="1"/>
</dbReference>
<dbReference type="SUPFAM" id="SSF52113">
    <property type="entry name" value="BRCT domain"/>
    <property type="match status" value="1"/>
</dbReference>
<dbReference type="SUPFAM" id="SSF56091">
    <property type="entry name" value="DNA ligase/mRNA capping enzyme, catalytic domain"/>
    <property type="match status" value="1"/>
</dbReference>
<dbReference type="SUPFAM" id="SSF50249">
    <property type="entry name" value="Nucleic acid-binding proteins"/>
    <property type="match status" value="1"/>
</dbReference>
<dbReference type="SUPFAM" id="SSF47781">
    <property type="entry name" value="RuvA domain 2-like"/>
    <property type="match status" value="1"/>
</dbReference>
<dbReference type="PROSITE" id="PS50172">
    <property type="entry name" value="BRCT"/>
    <property type="match status" value="1"/>
</dbReference>
<dbReference type="PROSITE" id="PS01055">
    <property type="entry name" value="DNA_LIGASE_N1"/>
    <property type="match status" value="1"/>
</dbReference>
<dbReference type="PROSITE" id="PS01056">
    <property type="entry name" value="DNA_LIGASE_N2"/>
    <property type="match status" value="1"/>
</dbReference>
<gene>
    <name evidence="1" type="primary">ligA</name>
    <name type="ordered locus">RPA3517</name>
</gene>
<accession>Q6N423</accession>
<comment type="function">
    <text evidence="1">DNA ligase that catalyzes the formation of phosphodiester linkages between 5'-phosphoryl and 3'-hydroxyl groups in double-stranded DNA using NAD as a coenzyme and as the energy source for the reaction. It is essential for DNA replication and repair of damaged DNA.</text>
</comment>
<comment type="catalytic activity">
    <reaction evidence="1">
        <text>NAD(+) + (deoxyribonucleotide)n-3'-hydroxyl + 5'-phospho-(deoxyribonucleotide)m = (deoxyribonucleotide)n+m + AMP + beta-nicotinamide D-nucleotide.</text>
        <dbReference type="EC" id="6.5.1.2"/>
    </reaction>
</comment>
<comment type="cofactor">
    <cofactor evidence="1">
        <name>Mg(2+)</name>
        <dbReference type="ChEBI" id="CHEBI:18420"/>
    </cofactor>
    <cofactor evidence="1">
        <name>Mn(2+)</name>
        <dbReference type="ChEBI" id="CHEBI:29035"/>
    </cofactor>
</comment>
<comment type="similarity">
    <text evidence="1">Belongs to the NAD-dependent DNA ligase family. LigA subfamily.</text>
</comment>
<comment type="sequence caution" evidence="2">
    <conflict type="erroneous initiation">
        <sequence resource="EMBL-CDS" id="CAE28958"/>
    </conflict>
</comment>
<organism>
    <name type="scientific">Rhodopseudomonas palustris (strain ATCC BAA-98 / CGA009)</name>
    <dbReference type="NCBI Taxonomy" id="258594"/>
    <lineage>
        <taxon>Bacteria</taxon>
        <taxon>Pseudomonadati</taxon>
        <taxon>Pseudomonadota</taxon>
        <taxon>Alphaproteobacteria</taxon>
        <taxon>Hyphomicrobiales</taxon>
        <taxon>Nitrobacteraceae</taxon>
        <taxon>Rhodopseudomonas</taxon>
    </lineage>
</organism>
<protein>
    <recommendedName>
        <fullName evidence="1">DNA ligase</fullName>
        <ecNumber evidence="1">6.5.1.2</ecNumber>
    </recommendedName>
    <alternativeName>
        <fullName evidence="1">Polydeoxyribonucleotide synthase [NAD(+)]</fullName>
    </alternativeName>
</protein>
<feature type="chain" id="PRO_0000313400" description="DNA ligase">
    <location>
        <begin position="1"/>
        <end position="715"/>
    </location>
</feature>
<feature type="domain" description="BRCT" evidence="1">
    <location>
        <begin position="637"/>
        <end position="715"/>
    </location>
</feature>
<feature type="active site" description="N6-AMP-lysine intermediate" evidence="1">
    <location>
        <position position="130"/>
    </location>
</feature>
<feature type="binding site" evidence="1">
    <location>
        <begin position="47"/>
        <end position="51"/>
    </location>
    <ligand>
        <name>NAD(+)</name>
        <dbReference type="ChEBI" id="CHEBI:57540"/>
    </ligand>
</feature>
<feature type="binding site" evidence="1">
    <location>
        <begin position="96"/>
        <end position="97"/>
    </location>
    <ligand>
        <name>NAD(+)</name>
        <dbReference type="ChEBI" id="CHEBI:57540"/>
    </ligand>
</feature>
<feature type="binding site" evidence="1">
    <location>
        <position position="128"/>
    </location>
    <ligand>
        <name>NAD(+)</name>
        <dbReference type="ChEBI" id="CHEBI:57540"/>
    </ligand>
</feature>
<feature type="binding site" evidence="1">
    <location>
        <position position="151"/>
    </location>
    <ligand>
        <name>NAD(+)</name>
        <dbReference type="ChEBI" id="CHEBI:57540"/>
    </ligand>
</feature>
<feature type="binding site" evidence="1">
    <location>
        <position position="188"/>
    </location>
    <ligand>
        <name>NAD(+)</name>
        <dbReference type="ChEBI" id="CHEBI:57540"/>
    </ligand>
</feature>
<feature type="binding site" evidence="1">
    <location>
        <position position="306"/>
    </location>
    <ligand>
        <name>NAD(+)</name>
        <dbReference type="ChEBI" id="CHEBI:57540"/>
    </ligand>
</feature>
<feature type="binding site" evidence="1">
    <location>
        <position position="330"/>
    </location>
    <ligand>
        <name>NAD(+)</name>
        <dbReference type="ChEBI" id="CHEBI:57540"/>
    </ligand>
</feature>
<feature type="binding site" evidence="1">
    <location>
        <position position="435"/>
    </location>
    <ligand>
        <name>Zn(2+)</name>
        <dbReference type="ChEBI" id="CHEBI:29105"/>
    </ligand>
</feature>
<feature type="binding site" evidence="1">
    <location>
        <position position="438"/>
    </location>
    <ligand>
        <name>Zn(2+)</name>
        <dbReference type="ChEBI" id="CHEBI:29105"/>
    </ligand>
</feature>
<feature type="binding site" evidence="1">
    <location>
        <position position="453"/>
    </location>
    <ligand>
        <name>Zn(2+)</name>
        <dbReference type="ChEBI" id="CHEBI:29105"/>
    </ligand>
</feature>
<feature type="binding site" evidence="1">
    <location>
        <position position="459"/>
    </location>
    <ligand>
        <name>Zn(2+)</name>
        <dbReference type="ChEBI" id="CHEBI:29105"/>
    </ligand>
</feature>
<proteinExistence type="inferred from homology"/>
<keyword id="KW-0227">DNA damage</keyword>
<keyword id="KW-0234">DNA repair</keyword>
<keyword id="KW-0235">DNA replication</keyword>
<keyword id="KW-0436">Ligase</keyword>
<keyword id="KW-0460">Magnesium</keyword>
<keyword id="KW-0464">Manganese</keyword>
<keyword id="KW-0479">Metal-binding</keyword>
<keyword id="KW-0520">NAD</keyword>
<keyword id="KW-0862">Zinc</keyword>
<sequence length="715" mass="78507">MTAKTKPAPDIATLTKPKAKVELMRLRLEIEGHDKAYYQDDAPKISDADYDALRRRLEAIEQKFPELVNASSPTQTVGAAPARGFAKVQHAVPMLSLGNAFADDEVAEFALRVQRFLKLDDVPAIVAEPKIDGLSLSLRYENGELVRAATRGDGFTGEDVTANVRTIKDVPNTLKGKHIPATCELRGEVYMLKQDFLALNKRQEEANETVFANPRNSAAGSLRQKDVTVTASRPLKFFAYAWGEMSDYPMEEPTQHKMLQWLDHAGFVVNPEITLCHSVEDALAFYRRIGEKRASLPYDIDGVVYKVDRLDYQERLGFVSRSPRWAIAHKFAAEQATTVLEKIDIQVGRTGAMTPVARLQPVTVGGVVVQNATLHNEDYIKGIGNDGEPIRDGVDIREGDTVVVQRAGDVIPQIVSVVMEKRPAGAEPYHFPHKCPVCGSHAVREEGEAVWRCTGALICPAQAVERLKHFVSRLAFDIDGLGEKQIELFHERGWVQEPADIFTLKARNAELKLEQLEGYGETSVRNLFAAIDARRSIELHRLVFALGIRHVGEGNAKLLARHYGTLDAFLSAMRAAADAQTEEGNTSEAYQDLDNIAGIGDVVAEAVVEFFAEERNIKALDALLAELTEVLPAEQARRDTAVAGKTVVFTGSLSKFTRDEAKAAAERLGAKVAGSVSKKTDYVVAGEDAGSKLTKAKDLGVTVLTEDEWLALIGN</sequence>
<reference key="1">
    <citation type="journal article" date="2004" name="Nat. Biotechnol.">
        <title>Complete genome sequence of the metabolically versatile photosynthetic bacterium Rhodopseudomonas palustris.</title>
        <authorList>
            <person name="Larimer F.W."/>
            <person name="Chain P."/>
            <person name="Hauser L."/>
            <person name="Lamerdin J.E."/>
            <person name="Malfatti S."/>
            <person name="Do L."/>
            <person name="Land M.L."/>
            <person name="Pelletier D.A."/>
            <person name="Beatty J.T."/>
            <person name="Lang A.S."/>
            <person name="Tabita F.R."/>
            <person name="Gibson J.L."/>
            <person name="Hanson T.E."/>
            <person name="Bobst C."/>
            <person name="Torres y Torres J.L."/>
            <person name="Peres C."/>
            <person name="Harrison F.H."/>
            <person name="Gibson J."/>
            <person name="Harwood C.S."/>
        </authorList>
    </citation>
    <scope>NUCLEOTIDE SEQUENCE [LARGE SCALE GENOMIC DNA]</scope>
    <source>
        <strain>ATCC BAA-98 / CGA009</strain>
    </source>
</reference>
<evidence type="ECO:0000255" key="1">
    <source>
        <dbReference type="HAMAP-Rule" id="MF_01588"/>
    </source>
</evidence>
<evidence type="ECO:0000305" key="2"/>